<gene>
    <name type="primary">rluB</name>
    <name type="ordered locus">bbp_262</name>
</gene>
<feature type="chain" id="PRO_0000099982" description="Ribosomal large subunit pseudouridine synthase B">
    <location>
        <begin position="1"/>
        <end position="247"/>
    </location>
</feature>
<feature type="domain" description="S4 RNA-binding" evidence="2">
    <location>
        <begin position="3"/>
        <end position="73"/>
    </location>
</feature>
<feature type="active site" description="Nucleophile" evidence="1">
    <location>
        <position position="110"/>
    </location>
</feature>
<evidence type="ECO:0000250" key="1"/>
<evidence type="ECO:0000255" key="2">
    <source>
        <dbReference type="PROSITE-ProRule" id="PRU00182"/>
    </source>
</evidence>
<evidence type="ECO:0000305" key="3"/>
<proteinExistence type="inferred from homology"/>
<dbReference type="EC" id="5.4.99.22"/>
<dbReference type="EMBL" id="AE016826">
    <property type="protein sequence ID" value="AAO26988.1"/>
    <property type="molecule type" value="Genomic_DNA"/>
</dbReference>
<dbReference type="RefSeq" id="WP_011091389.1">
    <property type="nucleotide sequence ID" value="NC_004545.1"/>
</dbReference>
<dbReference type="SMR" id="Q89AL1"/>
<dbReference type="STRING" id="224915.bbp_262"/>
<dbReference type="KEGG" id="bab:bbp_262"/>
<dbReference type="eggNOG" id="COG1187">
    <property type="taxonomic scope" value="Bacteria"/>
</dbReference>
<dbReference type="HOGENOM" id="CLU_024979_1_1_6"/>
<dbReference type="OrthoDB" id="9807213at2"/>
<dbReference type="Proteomes" id="UP000000601">
    <property type="component" value="Chromosome"/>
</dbReference>
<dbReference type="GO" id="GO:0160139">
    <property type="term" value="F:23S rRNA pseudouridine(2605) synthase activity"/>
    <property type="evidence" value="ECO:0007669"/>
    <property type="project" value="UniProtKB-EC"/>
</dbReference>
<dbReference type="GO" id="GO:0003723">
    <property type="term" value="F:RNA binding"/>
    <property type="evidence" value="ECO:0007669"/>
    <property type="project" value="UniProtKB-KW"/>
</dbReference>
<dbReference type="GO" id="GO:0000455">
    <property type="term" value="P:enzyme-directed rRNA pseudouridine synthesis"/>
    <property type="evidence" value="ECO:0007669"/>
    <property type="project" value="UniProtKB-ARBA"/>
</dbReference>
<dbReference type="CDD" id="cd02556">
    <property type="entry name" value="PseudoU_synth_RluB"/>
    <property type="match status" value="1"/>
</dbReference>
<dbReference type="CDD" id="cd00165">
    <property type="entry name" value="S4"/>
    <property type="match status" value="1"/>
</dbReference>
<dbReference type="FunFam" id="3.30.70.580:FF:000009">
    <property type="entry name" value="Pseudouridine synthase"/>
    <property type="match status" value="1"/>
</dbReference>
<dbReference type="Gene3D" id="3.30.70.1560">
    <property type="entry name" value="Alpha-L RNA-binding motif"/>
    <property type="match status" value="1"/>
</dbReference>
<dbReference type="Gene3D" id="3.30.70.580">
    <property type="entry name" value="Pseudouridine synthase I, catalytic domain, N-terminal subdomain"/>
    <property type="match status" value="1"/>
</dbReference>
<dbReference type="Gene3D" id="3.10.290.10">
    <property type="entry name" value="RNA-binding S4 domain"/>
    <property type="match status" value="1"/>
</dbReference>
<dbReference type="InterPro" id="IPR042092">
    <property type="entry name" value="PsdUridine_s_RsuA/RluB/E/F_cat"/>
</dbReference>
<dbReference type="InterPro" id="IPR020103">
    <property type="entry name" value="PsdUridine_synth_cat_dom_sf"/>
</dbReference>
<dbReference type="InterPro" id="IPR006145">
    <property type="entry name" value="PsdUridine_synth_RsuA/RluA"/>
</dbReference>
<dbReference type="InterPro" id="IPR000748">
    <property type="entry name" value="PsdUridine_synth_RsuA/RluB/E/F"/>
</dbReference>
<dbReference type="InterPro" id="IPR018496">
    <property type="entry name" value="PsdUridine_synth_RsuA/RluB_CS"/>
</dbReference>
<dbReference type="InterPro" id="IPR050343">
    <property type="entry name" value="RsuA_PseudoU_synthase"/>
</dbReference>
<dbReference type="InterPro" id="IPR002942">
    <property type="entry name" value="S4_RNA-bd"/>
</dbReference>
<dbReference type="InterPro" id="IPR036986">
    <property type="entry name" value="S4_RNA-bd_sf"/>
</dbReference>
<dbReference type="InterPro" id="IPR020094">
    <property type="entry name" value="TruA/RsuA/RluB/E/F_N"/>
</dbReference>
<dbReference type="NCBIfam" id="TIGR00093">
    <property type="entry name" value="pseudouridine synthase"/>
    <property type="match status" value="1"/>
</dbReference>
<dbReference type="PANTHER" id="PTHR47683">
    <property type="entry name" value="PSEUDOURIDINE SYNTHASE FAMILY PROTEIN-RELATED"/>
    <property type="match status" value="1"/>
</dbReference>
<dbReference type="PANTHER" id="PTHR47683:SF3">
    <property type="entry name" value="RIBOSOMAL LARGE SUBUNIT PSEUDOURIDINE SYNTHASE B"/>
    <property type="match status" value="1"/>
</dbReference>
<dbReference type="Pfam" id="PF00849">
    <property type="entry name" value="PseudoU_synth_2"/>
    <property type="match status" value="1"/>
</dbReference>
<dbReference type="Pfam" id="PF01479">
    <property type="entry name" value="S4"/>
    <property type="match status" value="1"/>
</dbReference>
<dbReference type="SUPFAM" id="SSF55174">
    <property type="entry name" value="Alpha-L RNA-binding motif"/>
    <property type="match status" value="1"/>
</dbReference>
<dbReference type="SUPFAM" id="SSF55120">
    <property type="entry name" value="Pseudouridine synthase"/>
    <property type="match status" value="1"/>
</dbReference>
<dbReference type="PROSITE" id="PS01149">
    <property type="entry name" value="PSI_RSU"/>
    <property type="match status" value="1"/>
</dbReference>
<dbReference type="PROSITE" id="PS50889">
    <property type="entry name" value="S4"/>
    <property type="match status" value="1"/>
</dbReference>
<organism>
    <name type="scientific">Buchnera aphidicola subsp. Baizongia pistaciae (strain Bp)</name>
    <dbReference type="NCBI Taxonomy" id="224915"/>
    <lineage>
        <taxon>Bacteria</taxon>
        <taxon>Pseudomonadati</taxon>
        <taxon>Pseudomonadota</taxon>
        <taxon>Gammaproteobacteria</taxon>
        <taxon>Enterobacterales</taxon>
        <taxon>Erwiniaceae</taxon>
        <taxon>Buchnera</taxon>
    </lineage>
</organism>
<accession>Q89AL1</accession>
<name>RLUB_BUCBP</name>
<keyword id="KW-0413">Isomerase</keyword>
<keyword id="KW-1185">Reference proteome</keyword>
<keyword id="KW-0694">RNA-binding</keyword>
<keyword id="KW-0698">rRNA processing</keyword>
<protein>
    <recommendedName>
        <fullName>Ribosomal large subunit pseudouridine synthase B</fullName>
        <ecNumber>5.4.99.22</ecNumber>
    </recommendedName>
    <alternativeName>
        <fullName>23S rRNA pseudouridine(2605) synthase</fullName>
    </alternativeName>
    <alternativeName>
        <fullName>rRNA pseudouridylate synthase B</fullName>
    </alternativeName>
    <alternativeName>
        <fullName>rRNA-uridine isomerase B</fullName>
    </alternativeName>
</protein>
<sequence length="247" mass="28994">MCEKIQKILARHGYGSRRYIESLIKSHSVKINDEVVKVGQRISINVIQKVIINNNNYKPKLNINKSLKVLLYNKPEGEICTRKDQRNRRTIFEKLPKLSNARWINIGRLDLNSSGLLLFTTDGELAYRLTHPSFNIERIYKVRVFGQFTENILKQLNVRVKLLDGYANFKSIQFKYGEGKNKWFNVSLCEGRHRIVRRIWEKLGFQVNKLVRISYAHLTLPKTLFPGTWITLNKHDIDVLCKKVNLR</sequence>
<comment type="function">
    <text evidence="1">Responsible for synthesis of pseudouridine from uracil-2605 in 23S ribosomal RNA.</text>
</comment>
<comment type="catalytic activity">
    <reaction>
        <text>uridine(2605) in 23S rRNA = pseudouridine(2605) in 23S rRNA</text>
        <dbReference type="Rhea" id="RHEA:42520"/>
        <dbReference type="Rhea" id="RHEA-COMP:10095"/>
        <dbReference type="Rhea" id="RHEA-COMP:10096"/>
        <dbReference type="ChEBI" id="CHEBI:65314"/>
        <dbReference type="ChEBI" id="CHEBI:65315"/>
        <dbReference type="EC" id="5.4.99.22"/>
    </reaction>
</comment>
<comment type="similarity">
    <text evidence="3">Belongs to the pseudouridine synthase RsuA family.</text>
</comment>
<reference key="1">
    <citation type="journal article" date="2003" name="Proc. Natl. Acad. Sci. U.S.A.">
        <title>Reductive genome evolution in Buchnera aphidicola.</title>
        <authorList>
            <person name="van Ham R.C.H.J."/>
            <person name="Kamerbeek J."/>
            <person name="Palacios C."/>
            <person name="Rausell C."/>
            <person name="Abascal F."/>
            <person name="Bastolla U."/>
            <person name="Fernandez J.M."/>
            <person name="Jimenez L."/>
            <person name="Postigo M."/>
            <person name="Silva F.J."/>
            <person name="Tamames J."/>
            <person name="Viguera E."/>
            <person name="Latorre A."/>
            <person name="Valencia A."/>
            <person name="Moran F."/>
            <person name="Moya A."/>
        </authorList>
    </citation>
    <scope>NUCLEOTIDE SEQUENCE [LARGE SCALE GENOMIC DNA]</scope>
    <source>
        <strain>Bp</strain>
    </source>
</reference>